<proteinExistence type="inferred from homology"/>
<sequence>MSRSSKKGPYVDIKLLDKIEAMNKANEKRAIRTWSRDSTIFPQMIGHTILVHDGRRHVPVYITENMVGHKLGEFAPTRFFRGHGGKKADKRGKVK</sequence>
<dbReference type="EMBL" id="CP001337">
    <property type="protein sequence ID" value="ACL25880.1"/>
    <property type="molecule type" value="Genomic_DNA"/>
</dbReference>
<dbReference type="RefSeq" id="WP_015941734.1">
    <property type="nucleotide sequence ID" value="NC_011831.1"/>
</dbReference>
<dbReference type="SMR" id="B8G6S1"/>
<dbReference type="STRING" id="326427.Cagg_3020"/>
<dbReference type="KEGG" id="cag:Cagg_3020"/>
<dbReference type="eggNOG" id="COG0185">
    <property type="taxonomic scope" value="Bacteria"/>
</dbReference>
<dbReference type="HOGENOM" id="CLU_144911_0_1_0"/>
<dbReference type="OrthoDB" id="9797833at2"/>
<dbReference type="Proteomes" id="UP000002508">
    <property type="component" value="Chromosome"/>
</dbReference>
<dbReference type="GO" id="GO:0005737">
    <property type="term" value="C:cytoplasm"/>
    <property type="evidence" value="ECO:0007669"/>
    <property type="project" value="UniProtKB-ARBA"/>
</dbReference>
<dbReference type="GO" id="GO:0015935">
    <property type="term" value="C:small ribosomal subunit"/>
    <property type="evidence" value="ECO:0007669"/>
    <property type="project" value="InterPro"/>
</dbReference>
<dbReference type="GO" id="GO:0019843">
    <property type="term" value="F:rRNA binding"/>
    <property type="evidence" value="ECO:0007669"/>
    <property type="project" value="UniProtKB-UniRule"/>
</dbReference>
<dbReference type="GO" id="GO:0003735">
    <property type="term" value="F:structural constituent of ribosome"/>
    <property type="evidence" value="ECO:0007669"/>
    <property type="project" value="InterPro"/>
</dbReference>
<dbReference type="GO" id="GO:0000028">
    <property type="term" value="P:ribosomal small subunit assembly"/>
    <property type="evidence" value="ECO:0007669"/>
    <property type="project" value="TreeGrafter"/>
</dbReference>
<dbReference type="GO" id="GO:0006412">
    <property type="term" value="P:translation"/>
    <property type="evidence" value="ECO:0007669"/>
    <property type="project" value="UniProtKB-UniRule"/>
</dbReference>
<dbReference type="FunFam" id="3.30.860.10:FF:000001">
    <property type="entry name" value="30S ribosomal protein S19"/>
    <property type="match status" value="1"/>
</dbReference>
<dbReference type="Gene3D" id="3.30.860.10">
    <property type="entry name" value="30s Ribosomal Protein S19, Chain A"/>
    <property type="match status" value="1"/>
</dbReference>
<dbReference type="HAMAP" id="MF_00531">
    <property type="entry name" value="Ribosomal_uS19"/>
    <property type="match status" value="1"/>
</dbReference>
<dbReference type="InterPro" id="IPR002222">
    <property type="entry name" value="Ribosomal_uS19"/>
</dbReference>
<dbReference type="InterPro" id="IPR005732">
    <property type="entry name" value="Ribosomal_uS19_bac-type"/>
</dbReference>
<dbReference type="InterPro" id="IPR020934">
    <property type="entry name" value="Ribosomal_uS19_CS"/>
</dbReference>
<dbReference type="InterPro" id="IPR023575">
    <property type="entry name" value="Ribosomal_uS19_SF"/>
</dbReference>
<dbReference type="NCBIfam" id="TIGR01050">
    <property type="entry name" value="rpsS_bact"/>
    <property type="match status" value="1"/>
</dbReference>
<dbReference type="PANTHER" id="PTHR11880">
    <property type="entry name" value="RIBOSOMAL PROTEIN S19P FAMILY MEMBER"/>
    <property type="match status" value="1"/>
</dbReference>
<dbReference type="PANTHER" id="PTHR11880:SF8">
    <property type="entry name" value="SMALL RIBOSOMAL SUBUNIT PROTEIN US19M"/>
    <property type="match status" value="1"/>
</dbReference>
<dbReference type="Pfam" id="PF00203">
    <property type="entry name" value="Ribosomal_S19"/>
    <property type="match status" value="1"/>
</dbReference>
<dbReference type="PIRSF" id="PIRSF002144">
    <property type="entry name" value="Ribosomal_S19"/>
    <property type="match status" value="1"/>
</dbReference>
<dbReference type="PRINTS" id="PR00975">
    <property type="entry name" value="RIBOSOMALS19"/>
</dbReference>
<dbReference type="SUPFAM" id="SSF54570">
    <property type="entry name" value="Ribosomal protein S19"/>
    <property type="match status" value="1"/>
</dbReference>
<dbReference type="PROSITE" id="PS00323">
    <property type="entry name" value="RIBOSOMAL_S19"/>
    <property type="match status" value="1"/>
</dbReference>
<accession>B8G6S1</accession>
<feature type="chain" id="PRO_1000146378" description="Small ribosomal subunit protein uS19">
    <location>
        <begin position="1"/>
        <end position="95"/>
    </location>
</feature>
<comment type="function">
    <text evidence="1">Protein S19 forms a complex with S13 that binds strongly to the 16S ribosomal RNA.</text>
</comment>
<comment type="similarity">
    <text evidence="1">Belongs to the universal ribosomal protein uS19 family.</text>
</comment>
<gene>
    <name evidence="1" type="primary">rpsS</name>
    <name type="ordered locus">Cagg_3020</name>
</gene>
<name>RS19_CHLAD</name>
<evidence type="ECO:0000255" key="1">
    <source>
        <dbReference type="HAMAP-Rule" id="MF_00531"/>
    </source>
</evidence>
<evidence type="ECO:0000305" key="2"/>
<organism>
    <name type="scientific">Chloroflexus aggregans (strain MD-66 / DSM 9485)</name>
    <dbReference type="NCBI Taxonomy" id="326427"/>
    <lineage>
        <taxon>Bacteria</taxon>
        <taxon>Bacillati</taxon>
        <taxon>Chloroflexota</taxon>
        <taxon>Chloroflexia</taxon>
        <taxon>Chloroflexales</taxon>
        <taxon>Chloroflexineae</taxon>
        <taxon>Chloroflexaceae</taxon>
        <taxon>Chloroflexus</taxon>
    </lineage>
</organism>
<reference key="1">
    <citation type="submission" date="2008-12" db="EMBL/GenBank/DDBJ databases">
        <title>Complete sequence of Chloroflexus aggregans DSM 9485.</title>
        <authorList>
            <consortium name="US DOE Joint Genome Institute"/>
            <person name="Lucas S."/>
            <person name="Copeland A."/>
            <person name="Lapidus A."/>
            <person name="Glavina del Rio T."/>
            <person name="Dalin E."/>
            <person name="Tice H."/>
            <person name="Pitluck S."/>
            <person name="Foster B."/>
            <person name="Larimer F."/>
            <person name="Land M."/>
            <person name="Hauser L."/>
            <person name="Kyrpides N."/>
            <person name="Mikhailova N."/>
            <person name="Bryant D.A."/>
            <person name="Richardson P."/>
        </authorList>
    </citation>
    <scope>NUCLEOTIDE SEQUENCE [LARGE SCALE GENOMIC DNA]</scope>
    <source>
        <strain>MD-66 / DSM 9485</strain>
    </source>
</reference>
<protein>
    <recommendedName>
        <fullName evidence="1">Small ribosomal subunit protein uS19</fullName>
    </recommendedName>
    <alternativeName>
        <fullName evidence="2">30S ribosomal protein S19</fullName>
    </alternativeName>
</protein>
<keyword id="KW-0687">Ribonucleoprotein</keyword>
<keyword id="KW-0689">Ribosomal protein</keyword>
<keyword id="KW-0694">RNA-binding</keyword>
<keyword id="KW-0699">rRNA-binding</keyword>